<organism>
    <name type="scientific">Cupriavidus pinatubonensis (strain JMP 134 / LMG 1197)</name>
    <name type="common">Cupriavidus necator (strain JMP 134)</name>
    <dbReference type="NCBI Taxonomy" id="264198"/>
    <lineage>
        <taxon>Bacteria</taxon>
        <taxon>Pseudomonadati</taxon>
        <taxon>Pseudomonadota</taxon>
        <taxon>Betaproteobacteria</taxon>
        <taxon>Burkholderiales</taxon>
        <taxon>Burkholderiaceae</taxon>
        <taxon>Cupriavidus</taxon>
    </lineage>
</organism>
<gene>
    <name evidence="1" type="primary">rnfH</name>
    <name type="ordered locus">Reut_A1859</name>
</gene>
<name>RNFH_CUPPJ</name>
<reference key="1">
    <citation type="journal article" date="2010" name="PLoS ONE">
        <title>The complete multipartite genome sequence of Cupriavidus necator JMP134, a versatile pollutant degrader.</title>
        <authorList>
            <person name="Lykidis A."/>
            <person name="Perez-Pantoja D."/>
            <person name="Ledger T."/>
            <person name="Mavromatis K."/>
            <person name="Anderson I.J."/>
            <person name="Ivanova N.N."/>
            <person name="Hooper S.D."/>
            <person name="Lapidus A."/>
            <person name="Lucas S."/>
            <person name="Gonzalez B."/>
            <person name="Kyrpides N.C."/>
        </authorList>
    </citation>
    <scope>NUCLEOTIDE SEQUENCE [LARGE SCALE GENOMIC DNA]</scope>
    <source>
        <strain>JMP134 / LMG 1197</strain>
    </source>
</reference>
<comment type="similarity">
    <text evidence="1">Belongs to the UPF0125 (RnfH) family.</text>
</comment>
<evidence type="ECO:0000255" key="1">
    <source>
        <dbReference type="HAMAP-Rule" id="MF_00460"/>
    </source>
</evidence>
<evidence type="ECO:0000256" key="2">
    <source>
        <dbReference type="SAM" id="MobiDB-lite"/>
    </source>
</evidence>
<accession>Q470F9</accession>
<sequence>MAQADMVRISVCYARPDSVFLKEFDVLQGTTIAAAIVSSGVQQVCPEIDPSTMRVGIYGKLKTPDTVVRTGDRVEIYRALTADPKLARRRRVQKTRESGTREGQKWLRGGA</sequence>
<dbReference type="EMBL" id="CP000090">
    <property type="protein sequence ID" value="AAZ61224.1"/>
    <property type="molecule type" value="Genomic_DNA"/>
</dbReference>
<dbReference type="SMR" id="Q470F9"/>
<dbReference type="STRING" id="264198.Reut_A1859"/>
<dbReference type="KEGG" id="reu:Reut_A1859"/>
<dbReference type="eggNOG" id="COG2914">
    <property type="taxonomic scope" value="Bacteria"/>
</dbReference>
<dbReference type="HOGENOM" id="CLU_150721_0_0_4"/>
<dbReference type="OrthoDB" id="9796575at2"/>
<dbReference type="Gene3D" id="3.10.20.280">
    <property type="entry name" value="RnfH-like"/>
    <property type="match status" value="1"/>
</dbReference>
<dbReference type="HAMAP" id="MF_00460">
    <property type="entry name" value="UPF0125_RnfH"/>
    <property type="match status" value="1"/>
</dbReference>
<dbReference type="InterPro" id="IPR016155">
    <property type="entry name" value="Mopterin_synth/thiamin_S_b"/>
</dbReference>
<dbReference type="InterPro" id="IPR005346">
    <property type="entry name" value="RnfH"/>
</dbReference>
<dbReference type="InterPro" id="IPR037021">
    <property type="entry name" value="RnfH_sf"/>
</dbReference>
<dbReference type="NCBIfam" id="NF002490">
    <property type="entry name" value="PRK01777.1"/>
    <property type="match status" value="1"/>
</dbReference>
<dbReference type="PANTHER" id="PTHR37483">
    <property type="entry name" value="UPF0125 PROTEIN RATB"/>
    <property type="match status" value="1"/>
</dbReference>
<dbReference type="PANTHER" id="PTHR37483:SF1">
    <property type="entry name" value="UPF0125 PROTEIN RATB"/>
    <property type="match status" value="1"/>
</dbReference>
<dbReference type="Pfam" id="PF03658">
    <property type="entry name" value="Ub-RnfH"/>
    <property type="match status" value="1"/>
</dbReference>
<dbReference type="SUPFAM" id="SSF54285">
    <property type="entry name" value="MoaD/ThiS"/>
    <property type="match status" value="1"/>
</dbReference>
<feature type="chain" id="PRO_1000013591" description="Protein RnfH">
    <location>
        <begin position="1"/>
        <end position="111"/>
    </location>
</feature>
<feature type="region of interest" description="Disordered" evidence="2">
    <location>
        <begin position="88"/>
        <end position="111"/>
    </location>
</feature>
<feature type="compositionally biased region" description="Basic and acidic residues" evidence="2">
    <location>
        <begin position="94"/>
        <end position="105"/>
    </location>
</feature>
<protein>
    <recommendedName>
        <fullName evidence="1">Protein RnfH</fullName>
    </recommendedName>
</protein>
<proteinExistence type="inferred from homology"/>